<sequence>MIVLTLCLFLFLYSSVSCTSNNDCVQVNVTQLPGNENIIKDFLFQNFKEEGSLVVGGYYPTEVWYNCSTTQQTTAYKYFSNIHAFYFDMEAMENSTGNARGKPLLVHVHGNPVSIIVYISAYRDDVQFRPLLKHGLLCITKNDTVDYNSFTINQWRDICLGDDRKIPFSVVPTDNGTKLFGLEWNDDYVTAYISDESHRLNINNNWFNNVTLLYSRTSTATWQHSAAYVYQGVSNFTYYKLNKTAGLKSYELCEDYEYCTGYATNVFAPTSGGYIPDGFSFNNWFMLTNSSTFVSGRFVTNQPLLVNCLWPVPSFGVAAQEFCFEGAQFSQCNGVSLNNTVDVIRFNLNFTTDVQSGMGATVFSLNTTGGVILEISCYNDTVSESSFYSYGEIPFGVTDGPRYCYVLYNGTALKYLGTLPPSVKEIAISKWGHFYINGYNFFSTFPIDCIAFNLTTGASGAFWTIAYTSYTEALVQVENTAIKKVTYCNSHINNIKCSQLTANLQNGFYPVASSEVGLVNKSVVLLPSFYSHTSVNITIDLGMKRSVTVTIASPLSNITLPMQDNNIDVYCIRSNQFSVYVHSTCKSSLWDNNFNSACTDVLDATAVIKTGTCPFSFDKLNNYLTFNKFCLSLNPVGANCKLDVAARTRTNEQVFGSLYVIYEEGDNIVGVPSDNSGLHDLSVLHLDSCTDYNIYGRTGVGIIRKTNSTLLSGLYYTSLSGDLLGFKNVSDGVVYSVTPCDVSAQAAVIDGAIVGAMTSINSELLGLTHWTTTPNFYYYSIYNYTNVMNRGTAIDNDIDCEPIITYSNIGVCKNGALVFINVTHSDGDVQPISTGNVTIPTNFTISVQVEYIQVYTTPVSIDCARYVCNGNPRCNKLLTQYVSACQTIEQALAMGARLENMEIDSMLFVSENALKLASVEAFNSTENLDPIYKEWPNIGGSWLGGLKDILPSHNSKRKYRSAIEDLLFDKVVTSGLGTVDEDYKRSAGGYDIADLVCARYYNGIMVLPGVANDDKMTMYTASLTGGITLGALSGGAVAIPFAVAVQARLNYVALQTDVLNKNQQILANAFNQAIGNITQAFGKVNDAIHQTSKGLATVAKALAKVQDVVNTQGQALSHLTVQLQNNFQAISSSISDIYNRLDELSADAQVDRLITGRLTALNAFVSQTLTRQAEVRASRQLAKDKVNECVRSQSQRFGFCGNGTHLFSLANAAPNGMIFFHTVLLPTAYETVTAWSGICASDGSRTFGLVVEDVQLTLFRNLDEKFYLTPRTMYQPRVATSSDFVQIEGCDVLFVNGTVIELPSIIPDYIDINQTVQDILENFRPNWTVPELPLDIFHATYLNLTGEINDLEFRSEKLHNTTVELAILIDNINNTLVNLEWLNRIETYVKWPWYVWLLIGLVVIFCIPILLFCCCSTGCCGCIGCLGSCCHSICSRGQFESYEPIEKVHVH</sequence>
<accession>P36300</accession>
<comment type="function">
    <text evidence="1">S1 region attaches the virion to the cell membrane by interacting with host ANPEP/aminopeptidase N, initiating the infection. Binding to the receptor probably induces conformational changes in the S glycoprotein unmasking the fusion peptide of S2 region and activating membranes fusion. S2 region belongs to the class I viral fusion protein. Under the current model, the protein has at least 3 conformational states: pre-fusion native state, pre-hairpin intermediate state, and post-fusion hairpin state. During viral and target cell membrane fusion, the coiled coil regions (heptad repeats) regions assume a trimer-of-hairpins structure, positioning the fusion peptide in close proximity to the C-terminal region of the ectodomain. The formation of this structure appears to drive apposition and subsequent fusion of viral and target cell membranes.</text>
</comment>
<comment type="subunit">
    <text evidence="1 4 5">Homotrimer. During virus morphogenesis, found in a complex with M and HE proteins. Interacts with host ANPEP.</text>
</comment>
<comment type="subcellular location">
    <subcellularLocation>
        <location evidence="1">Virion membrane</location>
        <topology evidence="1">Single-pass type I membrane protein</topology>
    </subcellularLocation>
    <subcellularLocation>
        <location evidence="1">Host endoplasmic reticulum-Golgi intermediate compartment membrane</location>
        <topology evidence="1">Single-pass type I membrane protein</topology>
    </subcellularLocation>
    <text evidence="1">Accumulates in the endoplasmic reticulum-Golgi intermediate compartment, where it participates in virus particle assembly.</text>
</comment>
<comment type="domain">
    <text evidence="1">The KxHxx motif seems to function as an ER retrieval signal.</text>
</comment>
<comment type="similarity">
    <text evidence="1">Belongs to the alphacoronaviruses spike protein family.</text>
</comment>
<comment type="caution">
    <text evidence="1">In contrast to beta- and gammacoronaviruses, S glycoprotein is not cleaved into S1 and S2.</text>
</comment>
<evidence type="ECO:0000255" key="1">
    <source>
        <dbReference type="HAMAP-Rule" id="MF_04200"/>
    </source>
</evidence>
<evidence type="ECO:0000255" key="2">
    <source>
        <dbReference type="PROSITE-ProRule" id="PRU01271"/>
    </source>
</evidence>
<evidence type="ECO:0000255" key="3">
    <source>
        <dbReference type="PROSITE-ProRule" id="PRU01272"/>
    </source>
</evidence>
<evidence type="ECO:0000269" key="4">
    <source>
    </source>
</evidence>
<evidence type="ECO:0000269" key="5">
    <source>
    </source>
</evidence>
<protein>
    <recommendedName>
        <fullName evidence="1">Spike glycoprotein</fullName>
        <shortName evidence="1">S glycoprotein</shortName>
    </recommendedName>
    <alternativeName>
        <fullName evidence="1">E2</fullName>
    </alternativeName>
    <alternativeName>
        <fullName evidence="1">Peplomer protein</fullName>
    </alternativeName>
</protein>
<name>SPIKE_CVCAI</name>
<proteinExistence type="evidence at protein level"/>
<dbReference type="EMBL" id="D13096">
    <property type="protein sequence ID" value="BAA02408.1"/>
    <property type="molecule type" value="Genomic_RNA"/>
</dbReference>
<dbReference type="PIR" id="JQ1719">
    <property type="entry name" value="JQ1719"/>
</dbReference>
<dbReference type="SMR" id="P36300"/>
<dbReference type="GO" id="GO:0044173">
    <property type="term" value="C:host cell endoplasmic reticulum-Golgi intermediate compartment membrane"/>
    <property type="evidence" value="ECO:0007669"/>
    <property type="project" value="UniProtKB-SubCell"/>
</dbReference>
<dbReference type="GO" id="GO:0016020">
    <property type="term" value="C:membrane"/>
    <property type="evidence" value="ECO:0007669"/>
    <property type="project" value="UniProtKB-UniRule"/>
</dbReference>
<dbReference type="GO" id="GO:0019031">
    <property type="term" value="C:viral envelope"/>
    <property type="evidence" value="ECO:0007669"/>
    <property type="project" value="UniProtKB-UniRule"/>
</dbReference>
<dbReference type="GO" id="GO:0055036">
    <property type="term" value="C:virion membrane"/>
    <property type="evidence" value="ECO:0007669"/>
    <property type="project" value="UniProtKB-SubCell"/>
</dbReference>
<dbReference type="GO" id="GO:0075509">
    <property type="term" value="P:endocytosis involved in viral entry into host cell"/>
    <property type="evidence" value="ECO:0007669"/>
    <property type="project" value="UniProtKB-UniRule"/>
</dbReference>
<dbReference type="GO" id="GO:0039654">
    <property type="term" value="P:fusion of virus membrane with host endosome membrane"/>
    <property type="evidence" value="ECO:0007669"/>
    <property type="project" value="UniProtKB-UniRule"/>
</dbReference>
<dbReference type="GO" id="GO:0019064">
    <property type="term" value="P:fusion of virus membrane with host plasma membrane"/>
    <property type="evidence" value="ECO:0007669"/>
    <property type="project" value="UniProtKB-UniRule"/>
</dbReference>
<dbReference type="GO" id="GO:0046813">
    <property type="term" value="P:receptor-mediated virion attachment to host cell"/>
    <property type="evidence" value="ECO:0007669"/>
    <property type="project" value="UniProtKB-UniRule"/>
</dbReference>
<dbReference type="CDD" id="cd22377">
    <property type="entry name" value="TGEV-like_Spike_SD1-2_S1-S2_S2"/>
    <property type="match status" value="1"/>
</dbReference>
<dbReference type="Gene3D" id="1.20.5.300">
    <property type="match status" value="2"/>
</dbReference>
<dbReference type="Gene3D" id="2.60.40.3130">
    <property type="match status" value="1"/>
</dbReference>
<dbReference type="HAMAP" id="MF_04200">
    <property type="entry name" value="ALPHA_CORONA_SPIKE"/>
    <property type="match status" value="1"/>
</dbReference>
<dbReference type="InterPro" id="IPR042552">
    <property type="entry name" value="ALPHA_CORONA_SPIKE"/>
</dbReference>
<dbReference type="InterPro" id="IPR043607">
    <property type="entry name" value="CoV_S1_C"/>
</dbReference>
<dbReference type="InterPro" id="IPR043473">
    <property type="entry name" value="S2_sf_CoV"/>
</dbReference>
<dbReference type="InterPro" id="IPR002551">
    <property type="entry name" value="Spike_S1_CoV"/>
</dbReference>
<dbReference type="InterPro" id="IPR002552">
    <property type="entry name" value="Spike_S2_CoV"/>
</dbReference>
<dbReference type="InterPro" id="IPR043614">
    <property type="entry name" value="Spike_S2_CoV_C"/>
</dbReference>
<dbReference type="InterPro" id="IPR044873">
    <property type="entry name" value="Spike_S2_CoV_HR1"/>
</dbReference>
<dbReference type="InterPro" id="IPR044874">
    <property type="entry name" value="Spike_S2_CoV_HR2"/>
</dbReference>
<dbReference type="Pfam" id="PF01600">
    <property type="entry name" value="CoV_S1"/>
    <property type="match status" value="1"/>
</dbReference>
<dbReference type="Pfam" id="PF19209">
    <property type="entry name" value="CoV_S1_C"/>
    <property type="match status" value="1"/>
</dbReference>
<dbReference type="Pfam" id="PF01601">
    <property type="entry name" value="CoV_S2"/>
    <property type="match status" value="1"/>
</dbReference>
<dbReference type="Pfam" id="PF19214">
    <property type="entry name" value="CoV_S2_C"/>
    <property type="match status" value="1"/>
</dbReference>
<dbReference type="SUPFAM" id="SSF111474">
    <property type="entry name" value="Coronavirus S2 glycoprotein"/>
    <property type="match status" value="2"/>
</dbReference>
<dbReference type="PROSITE" id="PS51923">
    <property type="entry name" value="COV_S2_HR1"/>
    <property type="match status" value="1"/>
</dbReference>
<dbReference type="PROSITE" id="PS51924">
    <property type="entry name" value="COV_S2_HR2"/>
    <property type="match status" value="1"/>
</dbReference>
<keyword id="KW-0175">Coiled coil</keyword>
<keyword id="KW-0325">Glycoprotein</keyword>
<keyword id="KW-1043">Host membrane</keyword>
<keyword id="KW-0945">Host-virus interaction</keyword>
<keyword id="KW-0472">Membrane</keyword>
<keyword id="KW-0732">Signal</keyword>
<keyword id="KW-0812">Transmembrane</keyword>
<keyword id="KW-1133">Transmembrane helix</keyword>
<keyword id="KW-1161">Viral attachment to host cell</keyword>
<keyword id="KW-0261">Viral envelope protein</keyword>
<keyword id="KW-0946">Virion</keyword>
<keyword id="KW-0843">Virulence</keyword>
<keyword id="KW-1160">Virus entry into host cell</keyword>
<reference key="1">
    <citation type="journal article" date="1992" name="J. Gen. Virol.">
        <title>Analysis of a 9.6 kb sequence from the 3' end of canine coronavirus genomic RNA.</title>
        <authorList>
            <person name="Horsburgh B.C."/>
            <person name="Brierley I."/>
            <person name="Brown T.D.K."/>
        </authorList>
    </citation>
    <scope>NUCLEOTIDE SEQUENCE [GENOMIC RNA]</scope>
</reference>
<reference key="2">
    <citation type="journal article" date="1996" name="J. Virol.">
        <title>Feline aminopeptidase N serves as a receptor for feline, canine, porcine, and human coronaviruses in serogroup I.</title>
        <authorList>
            <person name="Tresnan D.B."/>
            <person name="Levis R."/>
            <person name="Holmes K.V."/>
        </authorList>
    </citation>
    <scope>INTERACTION WITH FELINE ANPEP</scope>
</reference>
<reference key="3">
    <citation type="journal article" date="1997" name="J. Virol.">
        <title>Interspecies aminopeptidase-N chimeras reveal species-specific receptor recognition by canine coronavirus, feline infectious peritonitis virus, and transmissible gastroenteritis virus.</title>
        <authorList>
            <person name="Benbacer L."/>
            <person name="Kut E."/>
            <person name="Besnardeau L."/>
            <person name="Laude H."/>
            <person name="Delmas B."/>
        </authorList>
    </citation>
    <scope>INTERACTION WITH CANINE ANPEP</scope>
</reference>
<gene>
    <name evidence="1" type="primary">S</name>
</gene>
<feature type="signal peptide" evidence="1">
    <location>
        <begin position="1"/>
        <end position="31"/>
    </location>
</feature>
<feature type="chain" id="PRO_0000037202" description="Spike glycoprotein" evidence="1">
    <location>
        <begin position="32"/>
        <end position="1451"/>
    </location>
</feature>
<feature type="topological domain" description="Virion surface" evidence="1">
    <location>
        <begin position="32"/>
        <end position="1392"/>
    </location>
</feature>
<feature type="transmembrane region" description="Helical" evidence="1">
    <location>
        <begin position="1393"/>
        <end position="1412"/>
    </location>
</feature>
<feature type="topological domain" description="Intravirion" evidence="1">
    <location>
        <begin position="1413"/>
        <end position="1451"/>
    </location>
</feature>
<feature type="region of interest" description="S1" evidence="1">
    <location>
        <begin position="32"/>
        <end position="779"/>
    </location>
</feature>
<feature type="region of interest" description="Interaction with host ANPEP" evidence="1">
    <location>
        <begin position="660"/>
        <end position="803"/>
    </location>
</feature>
<feature type="region of interest" description="S2" evidence="1">
    <location>
        <begin position="780"/>
        <end position="1451"/>
    </location>
</feature>
<feature type="region of interest" description="Fusion peptide" evidence="1">
    <location>
        <begin position="1024"/>
        <end position="1045"/>
    </location>
</feature>
<feature type="region of interest" description="Heptad repeat 1 (HR1)" evidence="2">
    <location>
        <begin position="1039"/>
        <end position="1158"/>
    </location>
</feature>
<feature type="region of interest" description="Heptad repeat 2 (HR2)" evidence="3">
    <location>
        <begin position="1307"/>
        <end position="1404"/>
    </location>
</feature>
<feature type="coiled-coil region" evidence="1">
    <location>
        <begin position="1106"/>
        <end position="1150"/>
    </location>
</feature>
<feature type="coiled-coil region" evidence="1">
    <location>
        <begin position="1340"/>
        <end position="1382"/>
    </location>
</feature>
<feature type="short sequence motif" description="KxHxx" evidence="1">
    <location>
        <begin position="1447"/>
        <end position="1451"/>
    </location>
</feature>
<organism>
    <name type="scientific">Canine coronavirus (strain Insavc-1)</name>
    <name type="common">CCoV</name>
    <name type="synonym">Canine enteric coronavirus</name>
    <dbReference type="NCBI Taxonomy" id="36391"/>
    <lineage>
        <taxon>Viruses</taxon>
        <taxon>Riboviria</taxon>
        <taxon>Orthornavirae</taxon>
        <taxon>Pisuviricota</taxon>
        <taxon>Pisoniviricetes</taxon>
        <taxon>Nidovirales</taxon>
        <taxon>Cornidovirineae</taxon>
        <taxon>Coronaviridae</taxon>
        <taxon>Orthocoronavirinae</taxon>
        <taxon>Alphacoronavirus</taxon>
        <taxon>Tegacovirus</taxon>
        <taxon>Alphacoronavirus 1</taxon>
    </lineage>
</organism>
<organismHost>
    <name type="scientific">Canis lupus familiaris</name>
    <name type="common">Dog</name>
    <name type="synonym">Canis familiaris</name>
    <dbReference type="NCBI Taxonomy" id="9615"/>
</organismHost>